<reference key="1">
    <citation type="submission" date="2006-08" db="EMBL/GenBank/DDBJ databases">
        <title>Complete sequence of chromosome 1 of Shewanella sp. MR-7.</title>
        <authorList>
            <person name="Copeland A."/>
            <person name="Lucas S."/>
            <person name="Lapidus A."/>
            <person name="Barry K."/>
            <person name="Detter J.C."/>
            <person name="Glavina del Rio T."/>
            <person name="Hammon N."/>
            <person name="Israni S."/>
            <person name="Dalin E."/>
            <person name="Tice H."/>
            <person name="Pitluck S."/>
            <person name="Kiss H."/>
            <person name="Brettin T."/>
            <person name="Bruce D."/>
            <person name="Han C."/>
            <person name="Tapia R."/>
            <person name="Gilna P."/>
            <person name="Schmutz J."/>
            <person name="Larimer F."/>
            <person name="Land M."/>
            <person name="Hauser L."/>
            <person name="Kyrpides N."/>
            <person name="Mikhailova N."/>
            <person name="Nealson K."/>
            <person name="Konstantinidis K."/>
            <person name="Klappenbach J."/>
            <person name="Tiedje J."/>
            <person name="Richardson P."/>
        </authorList>
    </citation>
    <scope>NUCLEOTIDE SEQUENCE [LARGE SCALE GENOMIC DNA]</scope>
    <source>
        <strain>MR-7</strain>
    </source>
</reference>
<comment type="function">
    <text evidence="1">Catalyzes the formation of 5-methyl-uridine at position 1939 (m5U1939) in 23S rRNA.</text>
</comment>
<comment type="catalytic activity">
    <reaction evidence="1">
        <text>uridine(1939) in 23S rRNA + S-adenosyl-L-methionine = 5-methyluridine(1939) in 23S rRNA + S-adenosyl-L-homocysteine + H(+)</text>
        <dbReference type="Rhea" id="RHEA:42908"/>
        <dbReference type="Rhea" id="RHEA-COMP:10278"/>
        <dbReference type="Rhea" id="RHEA-COMP:10279"/>
        <dbReference type="ChEBI" id="CHEBI:15378"/>
        <dbReference type="ChEBI" id="CHEBI:57856"/>
        <dbReference type="ChEBI" id="CHEBI:59789"/>
        <dbReference type="ChEBI" id="CHEBI:65315"/>
        <dbReference type="ChEBI" id="CHEBI:74447"/>
        <dbReference type="EC" id="2.1.1.190"/>
    </reaction>
</comment>
<comment type="similarity">
    <text evidence="1">Belongs to the class I-like SAM-binding methyltransferase superfamily. RNA M5U methyltransferase family. RlmD subfamily.</text>
</comment>
<comment type="sequence caution" evidence="2">
    <conflict type="erroneous initiation">
        <sequence resource="EMBL-CDS" id="ABI42175"/>
    </conflict>
</comment>
<evidence type="ECO:0000255" key="1">
    <source>
        <dbReference type="HAMAP-Rule" id="MF_01010"/>
    </source>
</evidence>
<evidence type="ECO:0000305" key="2"/>
<accession>Q0HXI0</accession>
<protein>
    <recommendedName>
        <fullName evidence="1">23S rRNA (uracil(1939)-C(5))-methyltransferase RlmD</fullName>
        <ecNumber evidence="1">2.1.1.190</ecNumber>
    </recommendedName>
    <alternativeName>
        <fullName evidence="1">23S rRNA(m5U1939)-methyltransferase</fullName>
    </alternativeName>
</protein>
<sequence>MAQFFKAKPNSSKQLSAKQSFSVHQLDHLGAGIAQHQGKVVFIPGALPSETVQAQLTEQKKNYARAKLIKVETPSAERVTPLCPHYQSCGGCDLQHMSLAGQREHKSAALVDIMAKFAGAEGNSVPALTGEGWHYRRRARLATLFDKNTKQLSLGFRASSSNQVVPIDSCLVLAKPLSDLIAPFAKLLNQLAAKSSLGHLELIDADNGHFAVIRITKSLNDKDMAKLAQFAEQHQIHICLQDNNGEFHGVNGTLLLPVYQLLDDKADATPVSLTFTPGNFVQVNAQINKAMVAQALDWLAPQPGERILDLFCGMGNFSLPLAKLGAEVIGVEGVPEMVSQARENAAANGLSNLTFYHGDLSADLSCEPWMGKIDKLLLDPARAGAFESLQWLKKMKPRQVVYVSCNPASLARDSAVLLERGYKLQKLGLIDMFPQTHHIEAMALFELAK</sequence>
<proteinExistence type="inferred from homology"/>
<keyword id="KW-0004">4Fe-4S</keyword>
<keyword id="KW-0408">Iron</keyword>
<keyword id="KW-0411">Iron-sulfur</keyword>
<keyword id="KW-0479">Metal-binding</keyword>
<keyword id="KW-0489">Methyltransferase</keyword>
<keyword id="KW-0698">rRNA processing</keyword>
<keyword id="KW-0949">S-adenosyl-L-methionine</keyword>
<keyword id="KW-0808">Transferase</keyword>
<dbReference type="EC" id="2.1.1.190" evidence="1"/>
<dbReference type="EMBL" id="CP000444">
    <property type="protein sequence ID" value="ABI42175.1"/>
    <property type="status" value="ALT_INIT"/>
    <property type="molecule type" value="Genomic_DNA"/>
</dbReference>
<dbReference type="SMR" id="Q0HXI0"/>
<dbReference type="KEGG" id="shm:Shewmr7_1176"/>
<dbReference type="HOGENOM" id="CLU_014689_8_2_6"/>
<dbReference type="GO" id="GO:0051539">
    <property type="term" value="F:4 iron, 4 sulfur cluster binding"/>
    <property type="evidence" value="ECO:0007669"/>
    <property type="project" value="UniProtKB-KW"/>
</dbReference>
<dbReference type="GO" id="GO:0005506">
    <property type="term" value="F:iron ion binding"/>
    <property type="evidence" value="ECO:0007669"/>
    <property type="project" value="UniProtKB-UniRule"/>
</dbReference>
<dbReference type="GO" id="GO:0003723">
    <property type="term" value="F:RNA binding"/>
    <property type="evidence" value="ECO:0007669"/>
    <property type="project" value="InterPro"/>
</dbReference>
<dbReference type="GO" id="GO:0070041">
    <property type="term" value="F:rRNA (uridine-C5-)-methyltransferase activity"/>
    <property type="evidence" value="ECO:0007669"/>
    <property type="project" value="UniProtKB-UniRule"/>
</dbReference>
<dbReference type="GO" id="GO:0070475">
    <property type="term" value="P:rRNA base methylation"/>
    <property type="evidence" value="ECO:0007669"/>
    <property type="project" value="TreeGrafter"/>
</dbReference>
<dbReference type="CDD" id="cd02440">
    <property type="entry name" value="AdoMet_MTases"/>
    <property type="match status" value="1"/>
</dbReference>
<dbReference type="FunFam" id="3.40.50.150:FF:000009">
    <property type="entry name" value="23S rRNA (Uracil(1939)-C(5))-methyltransferase RlmD"/>
    <property type="match status" value="1"/>
</dbReference>
<dbReference type="FunFam" id="2.40.50.1070:FF:000017">
    <property type="entry name" value="23S rRNA (uracil(1939)-C(5))-methyltransferase RlmD"/>
    <property type="match status" value="1"/>
</dbReference>
<dbReference type="FunFam" id="2.40.50.140:FF:000097">
    <property type="entry name" value="23S rRNA (uracil(1939)-C(5))-methyltransferase RlmD"/>
    <property type="match status" value="1"/>
</dbReference>
<dbReference type="Gene3D" id="2.40.50.1070">
    <property type="match status" value="1"/>
</dbReference>
<dbReference type="Gene3D" id="2.40.50.140">
    <property type="entry name" value="Nucleic acid-binding proteins"/>
    <property type="match status" value="1"/>
</dbReference>
<dbReference type="Gene3D" id="3.40.50.150">
    <property type="entry name" value="Vaccinia Virus protein VP39"/>
    <property type="match status" value="1"/>
</dbReference>
<dbReference type="HAMAP" id="MF_01010">
    <property type="entry name" value="23SrRNA_methyltr_RlmD"/>
    <property type="match status" value="1"/>
</dbReference>
<dbReference type="InterPro" id="IPR001566">
    <property type="entry name" value="23S_rRNA_MeTrfase_RlmD"/>
</dbReference>
<dbReference type="InterPro" id="IPR030390">
    <property type="entry name" value="MeTrfase_TrmA_AS"/>
</dbReference>
<dbReference type="InterPro" id="IPR030391">
    <property type="entry name" value="MeTrfase_TrmA_CS"/>
</dbReference>
<dbReference type="InterPro" id="IPR012340">
    <property type="entry name" value="NA-bd_OB-fold"/>
</dbReference>
<dbReference type="InterPro" id="IPR029063">
    <property type="entry name" value="SAM-dependent_MTases_sf"/>
</dbReference>
<dbReference type="InterPro" id="IPR002792">
    <property type="entry name" value="TRAM_dom"/>
</dbReference>
<dbReference type="InterPro" id="IPR010280">
    <property type="entry name" value="U5_MeTrfase_fam"/>
</dbReference>
<dbReference type="NCBIfam" id="NF009639">
    <property type="entry name" value="PRK13168.1"/>
    <property type="match status" value="1"/>
</dbReference>
<dbReference type="NCBIfam" id="TIGR00479">
    <property type="entry name" value="rumA"/>
    <property type="match status" value="1"/>
</dbReference>
<dbReference type="PANTHER" id="PTHR11061:SF49">
    <property type="entry name" value="23S RRNA (URACIL(1939)-C(5))-METHYLTRANSFERASE RLMD"/>
    <property type="match status" value="1"/>
</dbReference>
<dbReference type="PANTHER" id="PTHR11061">
    <property type="entry name" value="RNA M5U METHYLTRANSFERASE"/>
    <property type="match status" value="1"/>
</dbReference>
<dbReference type="Pfam" id="PF01938">
    <property type="entry name" value="TRAM"/>
    <property type="match status" value="1"/>
</dbReference>
<dbReference type="Pfam" id="PF05958">
    <property type="entry name" value="tRNA_U5-meth_tr"/>
    <property type="match status" value="1"/>
</dbReference>
<dbReference type="SUPFAM" id="SSF50249">
    <property type="entry name" value="Nucleic acid-binding proteins"/>
    <property type="match status" value="1"/>
</dbReference>
<dbReference type="SUPFAM" id="SSF53335">
    <property type="entry name" value="S-adenosyl-L-methionine-dependent methyltransferases"/>
    <property type="match status" value="1"/>
</dbReference>
<dbReference type="PROSITE" id="PS51687">
    <property type="entry name" value="SAM_MT_RNA_M5U"/>
    <property type="match status" value="1"/>
</dbReference>
<dbReference type="PROSITE" id="PS50926">
    <property type="entry name" value="TRAM"/>
    <property type="match status" value="1"/>
</dbReference>
<dbReference type="PROSITE" id="PS01230">
    <property type="entry name" value="TRMA_1"/>
    <property type="match status" value="1"/>
</dbReference>
<dbReference type="PROSITE" id="PS01231">
    <property type="entry name" value="TRMA_2"/>
    <property type="match status" value="1"/>
</dbReference>
<feature type="chain" id="PRO_0000282065" description="23S rRNA (uracil(1939)-C(5))-methyltransferase RlmD">
    <location>
        <begin position="1"/>
        <end position="449"/>
    </location>
</feature>
<feature type="domain" description="TRAM" evidence="1">
    <location>
        <begin position="12"/>
        <end position="70"/>
    </location>
</feature>
<feature type="active site" description="Nucleophile" evidence="1">
    <location>
        <position position="405"/>
    </location>
</feature>
<feature type="binding site" evidence="1">
    <location>
        <position position="83"/>
    </location>
    <ligand>
        <name>[4Fe-4S] cluster</name>
        <dbReference type="ChEBI" id="CHEBI:49883"/>
    </ligand>
</feature>
<feature type="binding site" evidence="1">
    <location>
        <position position="89"/>
    </location>
    <ligand>
        <name>[4Fe-4S] cluster</name>
        <dbReference type="ChEBI" id="CHEBI:49883"/>
    </ligand>
</feature>
<feature type="binding site" evidence="1">
    <location>
        <position position="92"/>
    </location>
    <ligand>
        <name>[4Fe-4S] cluster</name>
        <dbReference type="ChEBI" id="CHEBI:49883"/>
    </ligand>
</feature>
<feature type="binding site" evidence="1">
    <location>
        <position position="170"/>
    </location>
    <ligand>
        <name>[4Fe-4S] cluster</name>
        <dbReference type="ChEBI" id="CHEBI:49883"/>
    </ligand>
</feature>
<feature type="binding site" evidence="1">
    <location>
        <position position="282"/>
    </location>
    <ligand>
        <name>S-adenosyl-L-methionine</name>
        <dbReference type="ChEBI" id="CHEBI:59789"/>
    </ligand>
</feature>
<feature type="binding site" evidence="1">
    <location>
        <position position="311"/>
    </location>
    <ligand>
        <name>S-adenosyl-L-methionine</name>
        <dbReference type="ChEBI" id="CHEBI:59789"/>
    </ligand>
</feature>
<feature type="binding site" evidence="1">
    <location>
        <position position="316"/>
    </location>
    <ligand>
        <name>S-adenosyl-L-methionine</name>
        <dbReference type="ChEBI" id="CHEBI:59789"/>
    </ligand>
</feature>
<feature type="binding site" evidence="1">
    <location>
        <position position="332"/>
    </location>
    <ligand>
        <name>S-adenosyl-L-methionine</name>
        <dbReference type="ChEBI" id="CHEBI:59789"/>
    </ligand>
</feature>
<feature type="binding site" evidence="1">
    <location>
        <position position="359"/>
    </location>
    <ligand>
        <name>S-adenosyl-L-methionine</name>
        <dbReference type="ChEBI" id="CHEBI:59789"/>
    </ligand>
</feature>
<feature type="binding site" evidence="1">
    <location>
        <position position="379"/>
    </location>
    <ligand>
        <name>S-adenosyl-L-methionine</name>
        <dbReference type="ChEBI" id="CHEBI:59789"/>
    </ligand>
</feature>
<gene>
    <name evidence="1" type="primary">rlmD</name>
    <name type="synonym">rumA</name>
    <name type="ordered locus">Shewmr7_1176</name>
</gene>
<name>RLMD_SHESR</name>
<organism>
    <name type="scientific">Shewanella sp. (strain MR-7)</name>
    <dbReference type="NCBI Taxonomy" id="60481"/>
    <lineage>
        <taxon>Bacteria</taxon>
        <taxon>Pseudomonadati</taxon>
        <taxon>Pseudomonadota</taxon>
        <taxon>Gammaproteobacteria</taxon>
        <taxon>Alteromonadales</taxon>
        <taxon>Shewanellaceae</taxon>
        <taxon>Shewanella</taxon>
    </lineage>
</organism>